<dbReference type="EMBL" id="CP001401">
    <property type="protein sequence ID" value="ACP55838.1"/>
    <property type="molecule type" value="Genomic_DNA"/>
</dbReference>
<dbReference type="RefSeq" id="WP_012711863.1">
    <property type="nucleotide sequence ID" value="NC_012632.1"/>
</dbReference>
<dbReference type="SMR" id="C3MZK6"/>
<dbReference type="GeneID" id="84062203"/>
<dbReference type="KEGG" id="sim:M1627_1967"/>
<dbReference type="HOGENOM" id="CLU_041732_0_0_2"/>
<dbReference type="Proteomes" id="UP000002307">
    <property type="component" value="Chromosome"/>
</dbReference>
<dbReference type="GO" id="GO:0005524">
    <property type="term" value="F:ATP binding"/>
    <property type="evidence" value="ECO:0007669"/>
    <property type="project" value="UniProtKB-UniRule"/>
</dbReference>
<dbReference type="GO" id="GO:0016887">
    <property type="term" value="F:ATP hydrolysis activity"/>
    <property type="evidence" value="ECO:0007669"/>
    <property type="project" value="InterPro"/>
</dbReference>
<dbReference type="GO" id="GO:0140664">
    <property type="term" value="F:ATP-dependent DNA damage sensor activity"/>
    <property type="evidence" value="ECO:0007669"/>
    <property type="project" value="InterPro"/>
</dbReference>
<dbReference type="GO" id="GO:0003684">
    <property type="term" value="F:damaged DNA binding"/>
    <property type="evidence" value="ECO:0007669"/>
    <property type="project" value="UniProtKB-UniRule"/>
</dbReference>
<dbReference type="GO" id="GO:0006310">
    <property type="term" value="P:DNA recombination"/>
    <property type="evidence" value="ECO:0007669"/>
    <property type="project" value="UniProtKB-UniRule"/>
</dbReference>
<dbReference type="GO" id="GO:0006281">
    <property type="term" value="P:DNA repair"/>
    <property type="evidence" value="ECO:0007669"/>
    <property type="project" value="UniProtKB-UniRule"/>
</dbReference>
<dbReference type="CDD" id="cd19515">
    <property type="entry name" value="archRadA"/>
    <property type="match status" value="1"/>
</dbReference>
<dbReference type="FunFam" id="3.40.50.300:FF:002052">
    <property type="entry name" value="DNA repair protein RAD51 homolog"/>
    <property type="match status" value="1"/>
</dbReference>
<dbReference type="Gene3D" id="1.10.150.20">
    <property type="entry name" value="5' to 3' exonuclease, C-terminal subdomain"/>
    <property type="match status" value="1"/>
</dbReference>
<dbReference type="Gene3D" id="3.40.50.300">
    <property type="entry name" value="P-loop containing nucleotide triphosphate hydrolases"/>
    <property type="match status" value="1"/>
</dbReference>
<dbReference type="HAMAP" id="MF_00348">
    <property type="entry name" value="RadA_arch"/>
    <property type="match status" value="1"/>
</dbReference>
<dbReference type="InterPro" id="IPR003593">
    <property type="entry name" value="AAA+_ATPase"/>
</dbReference>
<dbReference type="InterPro" id="IPR013632">
    <property type="entry name" value="DNA_recomb/repair_Rad51_C"/>
</dbReference>
<dbReference type="InterPro" id="IPR011938">
    <property type="entry name" value="DNA_recomb/repair_RadA"/>
</dbReference>
<dbReference type="InterPro" id="IPR016467">
    <property type="entry name" value="DNA_recomb/repair_RecA-like"/>
</dbReference>
<dbReference type="InterPro" id="IPR010995">
    <property type="entry name" value="DNA_repair_Rad51/TF_NusA_a-hlx"/>
</dbReference>
<dbReference type="InterPro" id="IPR027417">
    <property type="entry name" value="P-loop_NTPase"/>
</dbReference>
<dbReference type="InterPro" id="IPR020588">
    <property type="entry name" value="RecA_ATP-bd"/>
</dbReference>
<dbReference type="InterPro" id="IPR020587">
    <property type="entry name" value="RecA_monomer-monomer_interface"/>
</dbReference>
<dbReference type="NCBIfam" id="NF003301">
    <property type="entry name" value="PRK04301.1"/>
    <property type="match status" value="1"/>
</dbReference>
<dbReference type="NCBIfam" id="TIGR02236">
    <property type="entry name" value="recomb_radA"/>
    <property type="match status" value="1"/>
</dbReference>
<dbReference type="PANTHER" id="PTHR22942:SF30">
    <property type="entry name" value="MEIOTIC RECOMBINATION PROTEIN DMC1_LIM15 HOMOLOG"/>
    <property type="match status" value="1"/>
</dbReference>
<dbReference type="PANTHER" id="PTHR22942">
    <property type="entry name" value="RECA/RAD51/RADA DNA STRAND-PAIRING FAMILY MEMBER"/>
    <property type="match status" value="1"/>
</dbReference>
<dbReference type="Pfam" id="PF14520">
    <property type="entry name" value="HHH_5"/>
    <property type="match status" value="1"/>
</dbReference>
<dbReference type="Pfam" id="PF08423">
    <property type="entry name" value="Rad51"/>
    <property type="match status" value="1"/>
</dbReference>
<dbReference type="PIRSF" id="PIRSF005856">
    <property type="entry name" value="Rad51"/>
    <property type="match status" value="1"/>
</dbReference>
<dbReference type="SMART" id="SM00382">
    <property type="entry name" value="AAA"/>
    <property type="match status" value="1"/>
</dbReference>
<dbReference type="SUPFAM" id="SSF52540">
    <property type="entry name" value="P-loop containing nucleoside triphosphate hydrolases"/>
    <property type="match status" value="1"/>
</dbReference>
<dbReference type="SUPFAM" id="SSF47794">
    <property type="entry name" value="Rad51 N-terminal domain-like"/>
    <property type="match status" value="1"/>
</dbReference>
<dbReference type="PROSITE" id="PS50162">
    <property type="entry name" value="RECA_2"/>
    <property type="match status" value="1"/>
</dbReference>
<dbReference type="PROSITE" id="PS50163">
    <property type="entry name" value="RECA_3"/>
    <property type="match status" value="1"/>
</dbReference>
<accession>C3MZK6</accession>
<protein>
    <recommendedName>
        <fullName evidence="1">DNA repair and recombination protein RadA</fullName>
    </recommendedName>
</protein>
<proteinExistence type="inferred from homology"/>
<feature type="chain" id="PRO_1000205325" description="DNA repair and recombination protein RadA">
    <location>
        <begin position="1"/>
        <end position="324"/>
    </location>
</feature>
<feature type="binding site" evidence="1">
    <location>
        <begin position="114"/>
        <end position="121"/>
    </location>
    <ligand>
        <name>ATP</name>
        <dbReference type="ChEBI" id="CHEBI:30616"/>
    </ligand>
</feature>
<comment type="function">
    <text evidence="1">Involved in DNA repair and in homologous recombination. Binds and assemble on single-stranded DNA to form a nucleoprotein filament. Hydrolyzes ATP in a ssDNA-dependent manner and promotes DNA strand exchange between homologous DNA molecules.</text>
</comment>
<comment type="similarity">
    <text evidence="1">Belongs to the eukaryotic RecA-like protein family.</text>
</comment>
<reference key="1">
    <citation type="journal article" date="2009" name="Proc. Natl. Acad. Sci. U.S.A.">
        <title>Biogeography of the Sulfolobus islandicus pan-genome.</title>
        <authorList>
            <person name="Reno M.L."/>
            <person name="Held N.L."/>
            <person name="Fields C.J."/>
            <person name="Burke P.V."/>
            <person name="Whitaker R.J."/>
        </authorList>
    </citation>
    <scope>NUCLEOTIDE SEQUENCE [LARGE SCALE GENOMIC DNA]</scope>
    <source>
        <strain>M.16.27</strain>
    </source>
</reference>
<gene>
    <name evidence="1" type="primary">radA</name>
    <name type="ordered locus">M1627_1967</name>
</gene>
<sequence length="324" mass="35840">MSNEVEQKKSIKTINDLPGISQTVINKLIEAGYSSLETLAVASPQDLSVAAGIPLSTAQKIIKEARDALDIRFKTALEVKKERMNVKKISTGSQALDGLLAGGIETRTMTEFFGEFGSGKTQLCHQLSVNVQLPPEKGGLSGKAVYIDTEGTFRWERIENMAKALGLDIDNVMNNIYYIRAINTDHQIAIVDDLQELVSKDPSIKLIVVDSVTSHFRAEYPGRENLAVRQQKLNKHLHQLTRLAEVYDIAVIITNQVMARPDMFYGDPTVAVGGHTLYHVPGIRIQLKKSRGNRRIARVVDAPHLPEGEVVFALTEEGIRDAEE</sequence>
<keyword id="KW-0067">ATP-binding</keyword>
<keyword id="KW-0227">DNA damage</keyword>
<keyword id="KW-0233">DNA recombination</keyword>
<keyword id="KW-0238">DNA-binding</keyword>
<keyword id="KW-0547">Nucleotide-binding</keyword>
<name>RADA_SACI3</name>
<organism>
    <name type="scientific">Saccharolobus islandicus (strain M.16.27)</name>
    <name type="common">Sulfolobus islandicus</name>
    <dbReference type="NCBI Taxonomy" id="427318"/>
    <lineage>
        <taxon>Archaea</taxon>
        <taxon>Thermoproteota</taxon>
        <taxon>Thermoprotei</taxon>
        <taxon>Sulfolobales</taxon>
        <taxon>Sulfolobaceae</taxon>
        <taxon>Saccharolobus</taxon>
    </lineage>
</organism>
<evidence type="ECO:0000255" key="1">
    <source>
        <dbReference type="HAMAP-Rule" id="MF_00348"/>
    </source>
</evidence>